<accession>A9N034</accession>
<feature type="chain" id="PRO_1000088622" description="Tyrosine--tRNA ligase">
    <location>
        <begin position="1"/>
        <end position="424"/>
    </location>
</feature>
<feature type="domain" description="S4 RNA-binding" evidence="1">
    <location>
        <begin position="357"/>
        <end position="414"/>
    </location>
</feature>
<feature type="short sequence motif" description="'HIGH' region">
    <location>
        <begin position="42"/>
        <end position="51"/>
    </location>
</feature>
<feature type="short sequence motif" description="'KMSKS' region">
    <location>
        <begin position="235"/>
        <end position="239"/>
    </location>
</feature>
<feature type="binding site" evidence="1">
    <location>
        <position position="37"/>
    </location>
    <ligand>
        <name>L-tyrosine</name>
        <dbReference type="ChEBI" id="CHEBI:58315"/>
    </ligand>
</feature>
<feature type="binding site" evidence="1">
    <location>
        <position position="175"/>
    </location>
    <ligand>
        <name>L-tyrosine</name>
        <dbReference type="ChEBI" id="CHEBI:58315"/>
    </ligand>
</feature>
<feature type="binding site" evidence="1">
    <location>
        <position position="179"/>
    </location>
    <ligand>
        <name>L-tyrosine</name>
        <dbReference type="ChEBI" id="CHEBI:58315"/>
    </ligand>
</feature>
<feature type="binding site" evidence="1">
    <location>
        <position position="238"/>
    </location>
    <ligand>
        <name>ATP</name>
        <dbReference type="ChEBI" id="CHEBI:30616"/>
    </ligand>
</feature>
<name>SYY_SALPB</name>
<evidence type="ECO:0000255" key="1">
    <source>
        <dbReference type="HAMAP-Rule" id="MF_02006"/>
    </source>
</evidence>
<reference key="1">
    <citation type="submission" date="2007-11" db="EMBL/GenBank/DDBJ databases">
        <authorList>
            <consortium name="The Salmonella enterica serovar Paratyphi B Genome Sequencing Project"/>
            <person name="McClelland M."/>
            <person name="Sanderson E.K."/>
            <person name="Porwollik S."/>
            <person name="Spieth J."/>
            <person name="Clifton W.S."/>
            <person name="Fulton R."/>
            <person name="Cordes M."/>
            <person name="Wollam A."/>
            <person name="Shah N."/>
            <person name="Pepin K."/>
            <person name="Bhonagiri V."/>
            <person name="Nash W."/>
            <person name="Johnson M."/>
            <person name="Thiruvilangam P."/>
            <person name="Wilson R."/>
        </authorList>
    </citation>
    <scope>NUCLEOTIDE SEQUENCE [LARGE SCALE GENOMIC DNA]</scope>
    <source>
        <strain>ATCC BAA-1250 / SPB7</strain>
    </source>
</reference>
<keyword id="KW-0030">Aminoacyl-tRNA synthetase</keyword>
<keyword id="KW-0067">ATP-binding</keyword>
<keyword id="KW-0963">Cytoplasm</keyword>
<keyword id="KW-0436">Ligase</keyword>
<keyword id="KW-0547">Nucleotide-binding</keyword>
<keyword id="KW-0648">Protein biosynthesis</keyword>
<keyword id="KW-0694">RNA-binding</keyword>
<protein>
    <recommendedName>
        <fullName evidence="1">Tyrosine--tRNA ligase</fullName>
        <ecNumber evidence="1">6.1.1.1</ecNumber>
    </recommendedName>
    <alternativeName>
        <fullName evidence="1">Tyrosyl-tRNA synthetase</fullName>
        <shortName evidence="1">TyrRS</shortName>
    </alternativeName>
</protein>
<comment type="function">
    <text evidence="1">Catalyzes the attachment of tyrosine to tRNA(Tyr) in a two-step reaction: tyrosine is first activated by ATP to form Tyr-AMP and then transferred to the acceptor end of tRNA(Tyr).</text>
</comment>
<comment type="catalytic activity">
    <reaction evidence="1">
        <text>tRNA(Tyr) + L-tyrosine + ATP = L-tyrosyl-tRNA(Tyr) + AMP + diphosphate + H(+)</text>
        <dbReference type="Rhea" id="RHEA:10220"/>
        <dbReference type="Rhea" id="RHEA-COMP:9706"/>
        <dbReference type="Rhea" id="RHEA-COMP:9707"/>
        <dbReference type="ChEBI" id="CHEBI:15378"/>
        <dbReference type="ChEBI" id="CHEBI:30616"/>
        <dbReference type="ChEBI" id="CHEBI:33019"/>
        <dbReference type="ChEBI" id="CHEBI:58315"/>
        <dbReference type="ChEBI" id="CHEBI:78442"/>
        <dbReference type="ChEBI" id="CHEBI:78536"/>
        <dbReference type="ChEBI" id="CHEBI:456215"/>
        <dbReference type="EC" id="6.1.1.1"/>
    </reaction>
</comment>
<comment type="subunit">
    <text evidence="1">Homodimer.</text>
</comment>
<comment type="subcellular location">
    <subcellularLocation>
        <location evidence="1">Cytoplasm</location>
    </subcellularLocation>
</comment>
<comment type="similarity">
    <text evidence="1">Belongs to the class-I aminoacyl-tRNA synthetase family. TyrS type 1 subfamily.</text>
</comment>
<organism>
    <name type="scientific">Salmonella paratyphi B (strain ATCC BAA-1250 / SPB7)</name>
    <dbReference type="NCBI Taxonomy" id="1016998"/>
    <lineage>
        <taxon>Bacteria</taxon>
        <taxon>Pseudomonadati</taxon>
        <taxon>Pseudomonadota</taxon>
        <taxon>Gammaproteobacteria</taxon>
        <taxon>Enterobacterales</taxon>
        <taxon>Enterobacteriaceae</taxon>
        <taxon>Salmonella</taxon>
    </lineage>
</organism>
<proteinExistence type="inferred from homology"/>
<gene>
    <name evidence="1" type="primary">tyrS</name>
    <name type="ordered locus">SPAB_01872</name>
</gene>
<dbReference type="EC" id="6.1.1.1" evidence="1"/>
<dbReference type="EMBL" id="CP000886">
    <property type="protein sequence ID" value="ABX67265.1"/>
    <property type="molecule type" value="Genomic_DNA"/>
</dbReference>
<dbReference type="RefSeq" id="WP_000168626.1">
    <property type="nucleotide sequence ID" value="NC_010102.1"/>
</dbReference>
<dbReference type="SMR" id="A9N034"/>
<dbReference type="KEGG" id="spq:SPAB_01872"/>
<dbReference type="PATRIC" id="fig|1016998.12.peg.1764"/>
<dbReference type="HOGENOM" id="CLU_024003_0_3_6"/>
<dbReference type="BioCyc" id="SENT1016998:SPAB_RS07600-MONOMER"/>
<dbReference type="Proteomes" id="UP000008556">
    <property type="component" value="Chromosome"/>
</dbReference>
<dbReference type="GO" id="GO:0005829">
    <property type="term" value="C:cytosol"/>
    <property type="evidence" value="ECO:0007669"/>
    <property type="project" value="TreeGrafter"/>
</dbReference>
<dbReference type="GO" id="GO:0005524">
    <property type="term" value="F:ATP binding"/>
    <property type="evidence" value="ECO:0007669"/>
    <property type="project" value="UniProtKB-UniRule"/>
</dbReference>
<dbReference type="GO" id="GO:0003723">
    <property type="term" value="F:RNA binding"/>
    <property type="evidence" value="ECO:0007669"/>
    <property type="project" value="UniProtKB-KW"/>
</dbReference>
<dbReference type="GO" id="GO:0004831">
    <property type="term" value="F:tyrosine-tRNA ligase activity"/>
    <property type="evidence" value="ECO:0007669"/>
    <property type="project" value="UniProtKB-UniRule"/>
</dbReference>
<dbReference type="GO" id="GO:0006437">
    <property type="term" value="P:tyrosyl-tRNA aminoacylation"/>
    <property type="evidence" value="ECO:0007669"/>
    <property type="project" value="UniProtKB-UniRule"/>
</dbReference>
<dbReference type="CDD" id="cd00165">
    <property type="entry name" value="S4"/>
    <property type="match status" value="1"/>
</dbReference>
<dbReference type="CDD" id="cd00805">
    <property type="entry name" value="TyrRS_core"/>
    <property type="match status" value="1"/>
</dbReference>
<dbReference type="FunFam" id="1.10.240.10:FF:000001">
    <property type="entry name" value="Tyrosine--tRNA ligase"/>
    <property type="match status" value="1"/>
</dbReference>
<dbReference type="FunFam" id="3.10.290.10:FF:000007">
    <property type="entry name" value="Tyrosine--tRNA ligase"/>
    <property type="match status" value="1"/>
</dbReference>
<dbReference type="FunFam" id="3.40.50.620:FF:000008">
    <property type="entry name" value="Tyrosine--tRNA ligase"/>
    <property type="match status" value="1"/>
</dbReference>
<dbReference type="Gene3D" id="3.40.50.620">
    <property type="entry name" value="HUPs"/>
    <property type="match status" value="1"/>
</dbReference>
<dbReference type="Gene3D" id="3.10.290.10">
    <property type="entry name" value="RNA-binding S4 domain"/>
    <property type="match status" value="1"/>
</dbReference>
<dbReference type="Gene3D" id="1.10.240.10">
    <property type="entry name" value="Tyrosyl-Transfer RNA Synthetase"/>
    <property type="match status" value="1"/>
</dbReference>
<dbReference type="HAMAP" id="MF_02006">
    <property type="entry name" value="Tyr_tRNA_synth_type1"/>
    <property type="match status" value="1"/>
</dbReference>
<dbReference type="InterPro" id="IPR001412">
    <property type="entry name" value="aa-tRNA-synth_I_CS"/>
</dbReference>
<dbReference type="InterPro" id="IPR002305">
    <property type="entry name" value="aa-tRNA-synth_Ic"/>
</dbReference>
<dbReference type="InterPro" id="IPR014729">
    <property type="entry name" value="Rossmann-like_a/b/a_fold"/>
</dbReference>
<dbReference type="InterPro" id="IPR002942">
    <property type="entry name" value="S4_RNA-bd"/>
</dbReference>
<dbReference type="InterPro" id="IPR036986">
    <property type="entry name" value="S4_RNA-bd_sf"/>
</dbReference>
<dbReference type="InterPro" id="IPR054608">
    <property type="entry name" value="SYY-like_C"/>
</dbReference>
<dbReference type="InterPro" id="IPR002307">
    <property type="entry name" value="Tyr-tRNA-ligase"/>
</dbReference>
<dbReference type="InterPro" id="IPR024088">
    <property type="entry name" value="Tyr-tRNA-ligase_bac-type"/>
</dbReference>
<dbReference type="InterPro" id="IPR024107">
    <property type="entry name" value="Tyr-tRNA-ligase_bac_1"/>
</dbReference>
<dbReference type="NCBIfam" id="TIGR00234">
    <property type="entry name" value="tyrS"/>
    <property type="match status" value="1"/>
</dbReference>
<dbReference type="PANTHER" id="PTHR11766:SF0">
    <property type="entry name" value="TYROSINE--TRNA LIGASE, MITOCHONDRIAL"/>
    <property type="match status" value="1"/>
</dbReference>
<dbReference type="PANTHER" id="PTHR11766">
    <property type="entry name" value="TYROSYL-TRNA SYNTHETASE"/>
    <property type="match status" value="1"/>
</dbReference>
<dbReference type="Pfam" id="PF22421">
    <property type="entry name" value="SYY_C-terminal"/>
    <property type="match status" value="1"/>
</dbReference>
<dbReference type="Pfam" id="PF00579">
    <property type="entry name" value="tRNA-synt_1b"/>
    <property type="match status" value="1"/>
</dbReference>
<dbReference type="PRINTS" id="PR01040">
    <property type="entry name" value="TRNASYNTHTYR"/>
</dbReference>
<dbReference type="SMART" id="SM00363">
    <property type="entry name" value="S4"/>
    <property type="match status" value="1"/>
</dbReference>
<dbReference type="SUPFAM" id="SSF55174">
    <property type="entry name" value="Alpha-L RNA-binding motif"/>
    <property type="match status" value="1"/>
</dbReference>
<dbReference type="SUPFAM" id="SSF52374">
    <property type="entry name" value="Nucleotidylyl transferase"/>
    <property type="match status" value="1"/>
</dbReference>
<dbReference type="PROSITE" id="PS00178">
    <property type="entry name" value="AA_TRNA_LIGASE_I"/>
    <property type="match status" value="1"/>
</dbReference>
<dbReference type="PROSITE" id="PS50889">
    <property type="entry name" value="S4"/>
    <property type="match status" value="1"/>
</dbReference>
<sequence length="424" mass="47282">MASSNLIKQLQERGLVAQVTDEDALAERLAQGPIALYCGFDPTADSLHLGHLVPLLCLKRFQQAGHKPVALVGGATGLIGDPSFKAAERKLNTEETVQEWVAKIRKQVAPFLDFDCGENSAIAANNYDWFGSMNVLTFLRDIGKHFSVNQMINKEAVKQRLNRDDQGISFTEFSYNLLQGYDFACLNKLHGVALQIGGSDQWGNITSGIDLTRRLHQNQVFGLTVPLITKADGTKFGKTEGGAVWLDPKKTSPYKFYQFWINTADADVYRFLKFFTFMDIEEINALEEEDKNSGKAPRAQYVLAEQVTRLVHGEEGLVAAKRITECLFSGSLSALSEADFEQLAQDGVPMVEMEKGADLMQALVDAELQPSRGQARKTIASNAVTINGEKQSDPEYIFNDEDRLFGRYTLLRRGKKNYCLICWK</sequence>